<proteinExistence type="inferred from homology"/>
<evidence type="ECO:0000255" key="1">
    <source>
        <dbReference type="HAMAP-Rule" id="MF_00484"/>
    </source>
</evidence>
<reference key="1">
    <citation type="journal article" date="2004" name="Nat. Biotechnol.">
        <title>The genome sequence of the anaerobic, sulfate-reducing bacterium Desulfovibrio vulgaris Hildenborough.</title>
        <authorList>
            <person name="Heidelberg J.F."/>
            <person name="Seshadri R."/>
            <person name="Haveman S.A."/>
            <person name="Hemme C.L."/>
            <person name="Paulsen I.T."/>
            <person name="Kolonay J.F."/>
            <person name="Eisen J.A."/>
            <person name="Ward N.L."/>
            <person name="Methe B.A."/>
            <person name="Brinkac L.M."/>
            <person name="Daugherty S.C."/>
            <person name="DeBoy R.T."/>
            <person name="Dodson R.J."/>
            <person name="Durkin A.S."/>
            <person name="Madupu R."/>
            <person name="Nelson W.C."/>
            <person name="Sullivan S.A."/>
            <person name="Fouts D.E."/>
            <person name="Haft D.H."/>
            <person name="Selengut J."/>
            <person name="Peterson J.D."/>
            <person name="Davidsen T.M."/>
            <person name="Zafar N."/>
            <person name="Zhou L."/>
            <person name="Radune D."/>
            <person name="Dimitrov G."/>
            <person name="Hance M."/>
            <person name="Tran K."/>
            <person name="Khouri H.M."/>
            <person name="Gill J."/>
            <person name="Utterback T.R."/>
            <person name="Feldblyum T.V."/>
            <person name="Wall J.D."/>
            <person name="Voordouw G."/>
            <person name="Fraser C.M."/>
        </authorList>
    </citation>
    <scope>NUCLEOTIDE SEQUENCE [LARGE SCALE GENOMIC DNA]</scope>
    <source>
        <strain>ATCC 29579 / DSM 644 / CCUG 34227 / NCIMB 8303 / VKM B-1760 / Hildenborough</strain>
    </source>
</reference>
<sequence length="489" mass="54678">MQRQVVFATSEMYPFSKSGGLGDVLGALPLALHRMGVPTAVVTPFYGRLRTADYPIRLTVSDCHVGYPWAPITCDVFEADYHGMPVYFIHRGEYFDRRYYYNDHKGDYFDNCERFVFFCRALLALMRRLGQPPAVLHAHDWQTALVPAFLYFLRQTDPFWQDTRSVLTIHNLAFQGRFASRLFETSGLPPQAWSVDGAEFWGDFNLLKAGIAYADKVTTVSPSYAREILGPAYGSGLDGILRKRAHALHGILNGADYDIWSPGNDRFLPCRYTPTDLAGKAQCKRALIEELGLDPHLARRPILGFIGRLRGQKGIDLLLDILPRLMESDVGVIILGEGNLTHEARALELMEAYRGRVCTIVSYTEDLAHRIQAGSDIFLMPSRYEPCGLTQMYALRYGTPPVATAVGGLRDTIVPWPSPESTGFTFGRCESAAFLRAILDAVHLWTTAPGDWQGMVRRAMAQAFTWERAGRAYLDLYAQLGVSPGEEGA</sequence>
<comment type="function">
    <text evidence="1">Synthesizes alpha-1,4-glucan chains using ADP-glucose.</text>
</comment>
<comment type="catalytic activity">
    <reaction evidence="1">
        <text>[(1-&gt;4)-alpha-D-glucosyl](n) + ADP-alpha-D-glucose = [(1-&gt;4)-alpha-D-glucosyl](n+1) + ADP + H(+)</text>
        <dbReference type="Rhea" id="RHEA:18189"/>
        <dbReference type="Rhea" id="RHEA-COMP:9584"/>
        <dbReference type="Rhea" id="RHEA-COMP:9587"/>
        <dbReference type="ChEBI" id="CHEBI:15378"/>
        <dbReference type="ChEBI" id="CHEBI:15444"/>
        <dbReference type="ChEBI" id="CHEBI:57498"/>
        <dbReference type="ChEBI" id="CHEBI:456216"/>
        <dbReference type="EC" id="2.4.1.21"/>
    </reaction>
</comment>
<comment type="pathway">
    <text evidence="1">Glycan biosynthesis; glycogen biosynthesis.</text>
</comment>
<comment type="similarity">
    <text evidence="1">Belongs to the glycosyltransferase 1 family. Bacterial/plant glycogen synthase subfamily.</text>
</comment>
<gene>
    <name evidence="1" type="primary">glgA</name>
    <name type="ordered locus">DVU_2244</name>
</gene>
<name>GLGA_NITV2</name>
<accession>Q729V4</accession>
<keyword id="KW-0320">Glycogen biosynthesis</keyword>
<keyword id="KW-0328">Glycosyltransferase</keyword>
<keyword id="KW-1185">Reference proteome</keyword>
<keyword id="KW-0808">Transferase</keyword>
<protein>
    <recommendedName>
        <fullName evidence="1">Glycogen synthase</fullName>
        <ecNumber evidence="1">2.4.1.21</ecNumber>
    </recommendedName>
    <alternativeName>
        <fullName evidence="1">Starch [bacterial glycogen] synthase</fullName>
    </alternativeName>
</protein>
<feature type="chain" id="PRO_0000188610" description="Glycogen synthase">
    <location>
        <begin position="1"/>
        <end position="489"/>
    </location>
</feature>
<feature type="binding site" evidence="1">
    <location>
        <position position="17"/>
    </location>
    <ligand>
        <name>ADP-alpha-D-glucose</name>
        <dbReference type="ChEBI" id="CHEBI:57498"/>
    </ligand>
</feature>
<dbReference type="EC" id="2.4.1.21" evidence="1"/>
<dbReference type="EMBL" id="AE017285">
    <property type="protein sequence ID" value="AAS96717.1"/>
    <property type="molecule type" value="Genomic_DNA"/>
</dbReference>
<dbReference type="RefSeq" id="WP_010939519.1">
    <property type="nucleotide sequence ID" value="NC_002937.3"/>
</dbReference>
<dbReference type="RefSeq" id="YP_011457.1">
    <property type="nucleotide sequence ID" value="NC_002937.3"/>
</dbReference>
<dbReference type="SMR" id="Q729V4"/>
<dbReference type="STRING" id="882.DVU_2244"/>
<dbReference type="CAZy" id="GT5">
    <property type="family name" value="Glycosyltransferase Family 5"/>
</dbReference>
<dbReference type="PaxDb" id="882-DVU_2244"/>
<dbReference type="EnsemblBacteria" id="AAS96717">
    <property type="protein sequence ID" value="AAS96717"/>
    <property type="gene ID" value="DVU_2244"/>
</dbReference>
<dbReference type="KEGG" id="dvu:DVU_2244"/>
<dbReference type="PATRIC" id="fig|882.5.peg.2039"/>
<dbReference type="eggNOG" id="COG0297">
    <property type="taxonomic scope" value="Bacteria"/>
</dbReference>
<dbReference type="HOGENOM" id="CLU_009583_18_5_7"/>
<dbReference type="OrthoDB" id="9808590at2"/>
<dbReference type="PhylomeDB" id="Q729V4"/>
<dbReference type="UniPathway" id="UPA00164"/>
<dbReference type="Proteomes" id="UP000002194">
    <property type="component" value="Chromosome"/>
</dbReference>
<dbReference type="GO" id="GO:0009011">
    <property type="term" value="F:alpha-1,4-glucan glucosyltransferase (ADP-glucose donor) activity"/>
    <property type="evidence" value="ECO:0007669"/>
    <property type="project" value="UniProtKB-UniRule"/>
</dbReference>
<dbReference type="GO" id="GO:0004373">
    <property type="term" value="F:alpha-1,4-glucan glucosyltransferase (UDP-glucose donor) activity"/>
    <property type="evidence" value="ECO:0007669"/>
    <property type="project" value="InterPro"/>
</dbReference>
<dbReference type="GO" id="GO:0005978">
    <property type="term" value="P:glycogen biosynthetic process"/>
    <property type="evidence" value="ECO:0007669"/>
    <property type="project" value="UniProtKB-UniRule"/>
</dbReference>
<dbReference type="CDD" id="cd03791">
    <property type="entry name" value="GT5_Glycogen_synthase_DULL1-like"/>
    <property type="match status" value="1"/>
</dbReference>
<dbReference type="Gene3D" id="3.40.50.2000">
    <property type="entry name" value="Glycogen Phosphorylase B"/>
    <property type="match status" value="2"/>
</dbReference>
<dbReference type="HAMAP" id="MF_00484">
    <property type="entry name" value="Glycogen_synth"/>
    <property type="match status" value="1"/>
</dbReference>
<dbReference type="InterPro" id="IPR001296">
    <property type="entry name" value="Glyco_trans_1"/>
</dbReference>
<dbReference type="InterPro" id="IPR011835">
    <property type="entry name" value="GS/SS"/>
</dbReference>
<dbReference type="InterPro" id="IPR013534">
    <property type="entry name" value="Starch_synth_cat_dom"/>
</dbReference>
<dbReference type="NCBIfam" id="TIGR02095">
    <property type="entry name" value="glgA"/>
    <property type="match status" value="1"/>
</dbReference>
<dbReference type="NCBIfam" id="NF001899">
    <property type="entry name" value="PRK00654.1-2"/>
    <property type="match status" value="1"/>
</dbReference>
<dbReference type="PANTHER" id="PTHR45825:SF11">
    <property type="entry name" value="ALPHA AMYLASE DOMAIN-CONTAINING PROTEIN"/>
    <property type="match status" value="1"/>
</dbReference>
<dbReference type="PANTHER" id="PTHR45825">
    <property type="entry name" value="GRANULE-BOUND STARCH SYNTHASE 1, CHLOROPLASTIC/AMYLOPLASTIC"/>
    <property type="match status" value="1"/>
</dbReference>
<dbReference type="Pfam" id="PF08323">
    <property type="entry name" value="Glyco_transf_5"/>
    <property type="match status" value="1"/>
</dbReference>
<dbReference type="Pfam" id="PF00534">
    <property type="entry name" value="Glycos_transf_1"/>
    <property type="match status" value="1"/>
</dbReference>
<dbReference type="SUPFAM" id="SSF53756">
    <property type="entry name" value="UDP-Glycosyltransferase/glycogen phosphorylase"/>
    <property type="match status" value="1"/>
</dbReference>
<organism>
    <name type="scientific">Nitratidesulfovibrio vulgaris (strain ATCC 29579 / DSM 644 / CCUG 34227 / NCIMB 8303 / VKM B-1760 / Hildenborough)</name>
    <name type="common">Desulfovibrio vulgaris</name>
    <dbReference type="NCBI Taxonomy" id="882"/>
    <lineage>
        <taxon>Bacteria</taxon>
        <taxon>Pseudomonadati</taxon>
        <taxon>Thermodesulfobacteriota</taxon>
        <taxon>Desulfovibrionia</taxon>
        <taxon>Desulfovibrionales</taxon>
        <taxon>Desulfovibrionaceae</taxon>
        <taxon>Nitratidesulfovibrio</taxon>
    </lineage>
</organism>